<organism>
    <name type="scientific">Homo sapiens</name>
    <name type="common">Human</name>
    <dbReference type="NCBI Taxonomy" id="9606"/>
    <lineage>
        <taxon>Eukaryota</taxon>
        <taxon>Metazoa</taxon>
        <taxon>Chordata</taxon>
        <taxon>Craniata</taxon>
        <taxon>Vertebrata</taxon>
        <taxon>Euteleostomi</taxon>
        <taxon>Mammalia</taxon>
        <taxon>Eutheria</taxon>
        <taxon>Euarchontoglires</taxon>
        <taxon>Primates</taxon>
        <taxon>Haplorrhini</taxon>
        <taxon>Catarrhini</taxon>
        <taxon>Hominidae</taxon>
        <taxon>Homo</taxon>
    </lineage>
</organism>
<keyword id="KW-0002">3D-structure</keyword>
<keyword id="KW-0025">Alternative splicing</keyword>
<keyword id="KW-0966">Cell projection</keyword>
<keyword id="KW-0963">Cytoplasm</keyword>
<keyword id="KW-0206">Cytoskeleton</keyword>
<keyword id="KW-1267">Proteomics identification</keyword>
<keyword id="KW-1185">Reference proteome</keyword>
<dbReference type="EMBL" id="AF196568">
    <property type="protein sequence ID" value="AAG28497.1"/>
    <property type="molecule type" value="mRNA"/>
</dbReference>
<dbReference type="EMBL" id="AK094830">
    <property type="protein sequence ID" value="BAC04430.1"/>
    <property type="molecule type" value="mRNA"/>
</dbReference>
<dbReference type="EMBL" id="AY336746">
    <property type="protein sequence ID" value="AAQ16116.1"/>
    <property type="molecule type" value="mRNA"/>
</dbReference>
<dbReference type="CCDS" id="CCDS3099.1">
    <molecule id="Q86XW9-2"/>
</dbReference>
<dbReference type="CCDS" id="CCDS87141.1">
    <molecule id="Q86XW9-3"/>
</dbReference>
<dbReference type="CCDS" id="CCDS87142.1">
    <molecule id="Q86XW9-1"/>
</dbReference>
<dbReference type="RefSeq" id="NP_001335947.1">
    <molecule id="Q86XW9-1"/>
    <property type="nucleotide sequence ID" value="NM_001349018.2"/>
</dbReference>
<dbReference type="RefSeq" id="NP_001335950.1">
    <molecule id="Q86XW9-3"/>
    <property type="nucleotide sequence ID" value="NM_001349021.2"/>
</dbReference>
<dbReference type="RefSeq" id="NP_835231.1">
    <molecule id="Q86XW9-2"/>
    <property type="nucleotide sequence ID" value="NM_178130.4"/>
</dbReference>
<dbReference type="PDB" id="8J07">
    <property type="method" value="EM"/>
    <property type="resolution" value="4.10 A"/>
    <property type="chains" value="v1/v2/v3=1-330"/>
</dbReference>
<dbReference type="PDBsum" id="8J07"/>
<dbReference type="EMDB" id="EMD-35888"/>
<dbReference type="SMR" id="Q86XW9"/>
<dbReference type="BioGRID" id="131486">
    <property type="interactions" value="1"/>
</dbReference>
<dbReference type="FunCoup" id="Q86XW9">
    <property type="interactions" value="9"/>
</dbReference>
<dbReference type="IntAct" id="Q86XW9">
    <property type="interactions" value="1"/>
</dbReference>
<dbReference type="STRING" id="9606.ENSP00000335444"/>
<dbReference type="GlyGen" id="Q86XW9">
    <property type="glycosylation" value="1 site"/>
</dbReference>
<dbReference type="iPTMnet" id="Q86XW9"/>
<dbReference type="PhosphoSitePlus" id="Q86XW9"/>
<dbReference type="BioMuta" id="NME9"/>
<dbReference type="DMDM" id="47606157"/>
<dbReference type="jPOST" id="Q86XW9"/>
<dbReference type="MassIVE" id="Q86XW9"/>
<dbReference type="PeptideAtlas" id="Q86XW9"/>
<dbReference type="ProteomicsDB" id="70335">
    <molecule id="Q86XW9-1"/>
</dbReference>
<dbReference type="ProteomicsDB" id="70336">
    <molecule id="Q86XW9-2"/>
</dbReference>
<dbReference type="ProteomicsDB" id="70337">
    <molecule id="Q86XW9-3"/>
</dbReference>
<dbReference type="Antibodypedia" id="33430">
    <property type="antibodies" value="125 antibodies from 23 providers"/>
</dbReference>
<dbReference type="DNASU" id="347736"/>
<dbReference type="Ensembl" id="ENST00000317876.8">
    <molecule id="Q86XW9-2"/>
    <property type="protein sequence ID" value="ENSP00000321929.4"/>
    <property type="gene ID" value="ENSG00000181322.15"/>
</dbReference>
<dbReference type="Ensembl" id="ENST00000333911.9">
    <molecule id="Q86XW9-1"/>
    <property type="protein sequence ID" value="ENSP00000335444.3"/>
    <property type="gene ID" value="ENSG00000181322.15"/>
</dbReference>
<dbReference type="Ensembl" id="ENST00000383180.6">
    <molecule id="Q86XW9-2"/>
    <property type="protein sequence ID" value="ENSP00000372667.2"/>
    <property type="gene ID" value="ENSG00000181322.15"/>
</dbReference>
<dbReference type="Ensembl" id="ENST00000484930.5">
    <molecule id="Q86XW9-3"/>
    <property type="protein sequence ID" value="ENSP00000419882.1"/>
    <property type="gene ID" value="ENSG00000181322.15"/>
</dbReference>
<dbReference type="GeneID" id="347736"/>
<dbReference type="KEGG" id="hsa:347736"/>
<dbReference type="MANE-Select" id="ENST00000333911.9">
    <property type="protein sequence ID" value="ENSP00000335444.3"/>
    <property type="RefSeq nucleotide sequence ID" value="NM_001349018.2"/>
    <property type="RefSeq protein sequence ID" value="NP_001335947.1"/>
</dbReference>
<dbReference type="UCSC" id="uc003ese.1">
    <molecule id="Q86XW9-1"/>
    <property type="organism name" value="human"/>
</dbReference>
<dbReference type="AGR" id="HGNC:21343"/>
<dbReference type="CTD" id="347736"/>
<dbReference type="DisGeNET" id="347736"/>
<dbReference type="GeneCards" id="NME9"/>
<dbReference type="HGNC" id="HGNC:21343">
    <property type="gene designation" value="NME9"/>
</dbReference>
<dbReference type="HPA" id="ENSG00000181322">
    <property type="expression patterns" value="Tissue enhanced (choroid plexus, fallopian tube)"/>
</dbReference>
<dbReference type="MIM" id="618584">
    <property type="type" value="gene"/>
</dbReference>
<dbReference type="neXtProt" id="NX_Q86XW9"/>
<dbReference type="OpenTargets" id="ENSG00000181322"/>
<dbReference type="PharmGKB" id="PA134909407"/>
<dbReference type="VEuPathDB" id="HostDB:ENSG00000181322"/>
<dbReference type="GeneTree" id="ENSGT00940000162486"/>
<dbReference type="HOGENOM" id="CLU_060216_1_1_1"/>
<dbReference type="InParanoid" id="Q86XW9"/>
<dbReference type="OMA" id="PCDPHVA"/>
<dbReference type="OrthoDB" id="10263751at2759"/>
<dbReference type="PAN-GO" id="Q86XW9">
    <property type="GO annotations" value="0 GO annotations based on evolutionary models"/>
</dbReference>
<dbReference type="PhylomeDB" id="Q86XW9"/>
<dbReference type="TreeFam" id="TF106374"/>
<dbReference type="PathwayCommons" id="Q86XW9"/>
<dbReference type="BioGRID-ORCS" id="347736">
    <property type="hits" value="8 hits in 1146 CRISPR screens"/>
</dbReference>
<dbReference type="ChiTaRS" id="NME9">
    <property type="organism name" value="human"/>
</dbReference>
<dbReference type="GenomeRNAi" id="347736"/>
<dbReference type="Pharos" id="Q86XW9">
    <property type="development level" value="Tbio"/>
</dbReference>
<dbReference type="PRO" id="PR:Q86XW9"/>
<dbReference type="Proteomes" id="UP000005640">
    <property type="component" value="Chromosome 3"/>
</dbReference>
<dbReference type="RNAct" id="Q86XW9">
    <property type="molecule type" value="protein"/>
</dbReference>
<dbReference type="Bgee" id="ENSG00000181322">
    <property type="expression patterns" value="Expressed in right uterine tube and 97 other cell types or tissues"/>
</dbReference>
<dbReference type="ExpressionAtlas" id="Q86XW9">
    <property type="expression patterns" value="baseline and differential"/>
</dbReference>
<dbReference type="GO" id="GO:0042995">
    <property type="term" value="C:cell projection"/>
    <property type="evidence" value="ECO:0007669"/>
    <property type="project" value="UniProtKB-KW"/>
</dbReference>
<dbReference type="GO" id="GO:0005856">
    <property type="term" value="C:cytoskeleton"/>
    <property type="evidence" value="ECO:0007669"/>
    <property type="project" value="UniProtKB-KW"/>
</dbReference>
<dbReference type="GO" id="GO:0120293">
    <property type="term" value="C:dynein axonemal particle"/>
    <property type="evidence" value="ECO:0000250"/>
    <property type="project" value="UniProtKB"/>
</dbReference>
<dbReference type="GO" id="GO:0004550">
    <property type="term" value="F:nucleoside diphosphate kinase activity"/>
    <property type="evidence" value="ECO:0007669"/>
    <property type="project" value="InterPro"/>
</dbReference>
<dbReference type="GO" id="GO:0006241">
    <property type="term" value="P:CTP biosynthetic process"/>
    <property type="evidence" value="ECO:0007669"/>
    <property type="project" value="InterPro"/>
</dbReference>
<dbReference type="GO" id="GO:0006183">
    <property type="term" value="P:GTP biosynthetic process"/>
    <property type="evidence" value="ECO:0007669"/>
    <property type="project" value="InterPro"/>
</dbReference>
<dbReference type="GO" id="GO:0006228">
    <property type="term" value="P:UTP biosynthetic process"/>
    <property type="evidence" value="ECO:0007669"/>
    <property type="project" value="InterPro"/>
</dbReference>
<dbReference type="CDD" id="cd04416">
    <property type="entry name" value="NDPk_TX"/>
    <property type="match status" value="1"/>
</dbReference>
<dbReference type="CDD" id="cd02948">
    <property type="entry name" value="TRX_NDPK"/>
    <property type="match status" value="1"/>
</dbReference>
<dbReference type="Gene3D" id="3.40.30.10">
    <property type="entry name" value="Glutaredoxin"/>
    <property type="match status" value="1"/>
</dbReference>
<dbReference type="Gene3D" id="3.30.70.141">
    <property type="entry name" value="Nucleoside diphosphate kinase-like domain"/>
    <property type="match status" value="1"/>
</dbReference>
<dbReference type="InterPro" id="IPR034907">
    <property type="entry name" value="NDK-like_dom"/>
</dbReference>
<dbReference type="InterPro" id="IPR036850">
    <property type="entry name" value="NDK-like_dom_sf"/>
</dbReference>
<dbReference type="InterPro" id="IPR001564">
    <property type="entry name" value="Nucleoside_diP_kinase"/>
</dbReference>
<dbReference type="InterPro" id="IPR036249">
    <property type="entry name" value="Thioredoxin-like_sf"/>
</dbReference>
<dbReference type="InterPro" id="IPR017937">
    <property type="entry name" value="Thioredoxin_CS"/>
</dbReference>
<dbReference type="InterPro" id="IPR013766">
    <property type="entry name" value="Thioredoxin_domain"/>
</dbReference>
<dbReference type="InterPro" id="IPR051766">
    <property type="entry name" value="TXND_domain-containing"/>
</dbReference>
<dbReference type="PANTHER" id="PTHR46135">
    <property type="entry name" value="NME/NM23 FAMILY MEMBER 8"/>
    <property type="match status" value="1"/>
</dbReference>
<dbReference type="PANTHER" id="PTHR46135:SF1">
    <property type="entry name" value="THIOREDOXIN DOMAIN-CONTAINING PROTEIN 6"/>
    <property type="match status" value="1"/>
</dbReference>
<dbReference type="Pfam" id="PF00334">
    <property type="entry name" value="NDK"/>
    <property type="match status" value="1"/>
</dbReference>
<dbReference type="Pfam" id="PF00085">
    <property type="entry name" value="Thioredoxin"/>
    <property type="match status" value="1"/>
</dbReference>
<dbReference type="PRINTS" id="PR01243">
    <property type="entry name" value="NUCDPKINASE"/>
</dbReference>
<dbReference type="SMART" id="SM00562">
    <property type="entry name" value="NDK"/>
    <property type="match status" value="1"/>
</dbReference>
<dbReference type="SUPFAM" id="SSF54919">
    <property type="entry name" value="Nucleoside diphosphate kinase, NDK"/>
    <property type="match status" value="1"/>
</dbReference>
<dbReference type="SUPFAM" id="SSF52833">
    <property type="entry name" value="Thioredoxin-like"/>
    <property type="match status" value="1"/>
</dbReference>
<dbReference type="PROSITE" id="PS51374">
    <property type="entry name" value="NDPK_LIKE"/>
    <property type="match status" value="1"/>
</dbReference>
<dbReference type="PROSITE" id="PS00194">
    <property type="entry name" value="THIOREDOXIN_1"/>
    <property type="match status" value="1"/>
</dbReference>
<evidence type="ECO:0000250" key="1">
    <source>
        <dbReference type="UniProtKB" id="A0A1L1SUL6"/>
    </source>
</evidence>
<evidence type="ECO:0000250" key="2">
    <source>
        <dbReference type="UniProtKB" id="Q6IRC5"/>
    </source>
</evidence>
<evidence type="ECO:0000256" key="3">
    <source>
        <dbReference type="SAM" id="MobiDB-lite"/>
    </source>
</evidence>
<evidence type="ECO:0000269" key="4">
    <source>
    </source>
</evidence>
<evidence type="ECO:0000303" key="5">
    <source>
    </source>
</evidence>
<evidence type="ECO:0000303" key="6">
    <source ref="3"/>
</evidence>
<evidence type="ECO:0000305" key="7"/>
<evidence type="ECO:0000305" key="8">
    <source>
    </source>
</evidence>
<evidence type="ECO:0000312" key="9">
    <source>
        <dbReference type="HGNC" id="HGNC:21343"/>
    </source>
</evidence>
<name>TXND6_HUMAN</name>
<gene>
    <name evidence="9" type="primary">NME9</name>
    <name type="synonym">TXL2</name>
    <name type="synonym">TXNDC6</name>
</gene>
<comment type="function">
    <text evidence="8">May be a regulator of microtubule physiology.</text>
</comment>
<comment type="subunit">
    <text>Monomer and homodimer.</text>
</comment>
<comment type="subcellular location">
    <subcellularLocation>
        <location evidence="1">Cytoplasm</location>
        <location evidence="1">Cytoskeleton</location>
        <location evidence="1">Cilium axoneme</location>
    </subcellularLocation>
    <subcellularLocation>
        <location evidence="2">Dynein axonemal particle</location>
    </subcellularLocation>
    <text evidence="1">Associated with microtubules. Detected in cilia of lung epithelium, and associated with the spermatid tail and manchette.</text>
</comment>
<comment type="alternative products">
    <event type="alternative splicing"/>
    <isoform>
        <id>Q86XW9-1</id>
        <name>1</name>
        <sequence type="displayed"/>
    </isoform>
    <isoform>
        <id>Q86XW9-2</id>
        <name>2</name>
        <sequence type="described" ref="VSP_010375 VSP_010377 VSP_010378"/>
    </isoform>
    <isoform>
        <id>Q86XW9-3</id>
        <name>3</name>
        <sequence type="described" ref="VSP_010376 VSP_010378"/>
    </isoform>
</comment>
<comment type="tissue specificity">
    <text evidence="4">Detected at very low levels in testis, lung and brain.</text>
</comment>
<comment type="miscellaneous">
    <text>Shows no detectable enzyme activity.</text>
</comment>
<comment type="similarity">
    <text evidence="7">Belongs to the NDK family.</text>
</comment>
<sequence>MGSRKKEIALQVNISTQELWEEMLSSKGLTVVDVYQGWCGPCKPVVSLFQKMRIEVGLDLLHFALAEADRLDVLEKYRGKCEPTFLFYAGGELVAVVRGANAPLLQKTILDQLEAEKKVLAEGRERKVIKDEALSDEDECVSHGKNNGEDEDMVSSERTCTLAIIKPDAVAHGKTDEIIMKIQEAGFEILTNEERTMTEAEVRLFYQHKAGEEAFEKLVHHMCSGPSHLLILTRTEGFEDVVTTWRTVMGPRDPNVARREQPESLRAQYGTEMPFNAVHGSRDREDADRELALLFPSLKFSDKDTEAPQGGEAEATAGPTEALCFPEDVD</sequence>
<proteinExistence type="evidence at protein level"/>
<protein>
    <recommendedName>
        <fullName evidence="7">Thioredoxin domain-containing protein 6</fullName>
    </recommendedName>
    <alternativeName>
        <fullName>Thioredoxin-like protein 2</fullName>
        <shortName>Txl-2</shortName>
    </alternativeName>
</protein>
<accession>Q86XW9</accession>
<accession>Q7Z4A8</accession>
<accession>Q8N1V7</accession>
<feature type="chain" id="PRO_0000120161" description="Thioredoxin domain-containing protein 6">
    <location>
        <begin position="1"/>
        <end position="330"/>
    </location>
</feature>
<feature type="domain" description="Thioredoxin">
    <location>
        <begin position="11"/>
        <end position="115"/>
    </location>
</feature>
<feature type="region of interest" description="NDK">
    <location>
        <begin position="157"/>
        <end position="303"/>
    </location>
</feature>
<feature type="region of interest" description="Disordered" evidence="3">
    <location>
        <begin position="300"/>
        <end position="330"/>
    </location>
</feature>
<feature type="compositionally biased region" description="Low complexity" evidence="3">
    <location>
        <begin position="307"/>
        <end position="322"/>
    </location>
</feature>
<feature type="splice variant" id="VSP_010375" description="In isoform 2." evidence="5">
    <location>
        <begin position="1"/>
        <end position="22"/>
    </location>
</feature>
<feature type="splice variant" id="VSP_010376" description="In isoform 3." evidence="6">
    <location>
        <begin position="66"/>
        <end position="128"/>
    </location>
</feature>
<feature type="splice variant" id="VSP_010377" description="In isoform 2." evidence="5">
    <location>
        <begin position="90"/>
        <end position="128"/>
    </location>
</feature>
<feature type="splice variant" id="VSP_010378" description="In isoform 2 and isoform 3." evidence="5 6">
    <original>GEAEATAGPTEALCFPEDVD</original>
    <variation>ESSTQPRLKITDLD</variation>
    <location>
        <begin position="311"/>
        <end position="330"/>
    </location>
</feature>
<feature type="sequence conflict" description="In Ref. 3; AAQ16116." evidence="7" ref="3">
    <original>A</original>
    <variation>V</variation>
    <location>
        <position position="214"/>
    </location>
</feature>
<reference key="1">
    <citation type="journal article" date="2003" name="J. Biol. Chem.">
        <title>Characterization of human thioredoxin-like 2. A novel microtubule-binding thioredoxin expressed predominantly in the cilia of lung airway epithelium and spermatid manchette and axoneme.</title>
        <authorList>
            <person name="Sadek C.M."/>
            <person name="Jimenez A."/>
            <person name="Damdimopoulos A.E."/>
            <person name="Kieselbach T."/>
            <person name="Nord M."/>
            <person name="Gustafsson J.-A."/>
            <person name="Spyrou G."/>
            <person name="Davis E.C."/>
            <person name="Oko R."/>
            <person name="van der Hoorn F.A."/>
            <person name="Miranda-Vizuete A."/>
        </authorList>
    </citation>
    <scope>NUCLEOTIDE SEQUENCE [MRNA] (ISOFORM 1)</scope>
    <scope>ALTERNATIVE SPLICING</scope>
    <scope>TISSUE SPECIFICITY</scope>
    <source>
        <tissue>Testis</tissue>
    </source>
</reference>
<reference key="2">
    <citation type="journal article" date="2004" name="Nat. Genet.">
        <title>Complete sequencing and characterization of 21,243 full-length human cDNAs.</title>
        <authorList>
            <person name="Ota T."/>
            <person name="Suzuki Y."/>
            <person name="Nishikawa T."/>
            <person name="Otsuki T."/>
            <person name="Sugiyama T."/>
            <person name="Irie R."/>
            <person name="Wakamatsu A."/>
            <person name="Hayashi K."/>
            <person name="Sato H."/>
            <person name="Nagai K."/>
            <person name="Kimura K."/>
            <person name="Makita H."/>
            <person name="Sekine M."/>
            <person name="Obayashi M."/>
            <person name="Nishi T."/>
            <person name="Shibahara T."/>
            <person name="Tanaka T."/>
            <person name="Ishii S."/>
            <person name="Yamamoto J."/>
            <person name="Saito K."/>
            <person name="Kawai Y."/>
            <person name="Isono Y."/>
            <person name="Nakamura Y."/>
            <person name="Nagahari K."/>
            <person name="Murakami K."/>
            <person name="Yasuda T."/>
            <person name="Iwayanagi T."/>
            <person name="Wagatsuma M."/>
            <person name="Shiratori A."/>
            <person name="Sudo H."/>
            <person name="Hosoiri T."/>
            <person name="Kaku Y."/>
            <person name="Kodaira H."/>
            <person name="Kondo H."/>
            <person name="Sugawara M."/>
            <person name="Takahashi M."/>
            <person name="Kanda K."/>
            <person name="Yokoi T."/>
            <person name="Furuya T."/>
            <person name="Kikkawa E."/>
            <person name="Omura Y."/>
            <person name="Abe K."/>
            <person name="Kamihara K."/>
            <person name="Katsuta N."/>
            <person name="Sato K."/>
            <person name="Tanikawa M."/>
            <person name="Yamazaki M."/>
            <person name="Ninomiya K."/>
            <person name="Ishibashi T."/>
            <person name="Yamashita H."/>
            <person name="Murakawa K."/>
            <person name="Fujimori K."/>
            <person name="Tanai H."/>
            <person name="Kimata M."/>
            <person name="Watanabe M."/>
            <person name="Hiraoka S."/>
            <person name="Chiba Y."/>
            <person name="Ishida S."/>
            <person name="Ono Y."/>
            <person name="Takiguchi S."/>
            <person name="Watanabe S."/>
            <person name="Yosida M."/>
            <person name="Hotuta T."/>
            <person name="Kusano J."/>
            <person name="Kanehori K."/>
            <person name="Takahashi-Fujii A."/>
            <person name="Hara H."/>
            <person name="Tanase T.-O."/>
            <person name="Nomura Y."/>
            <person name="Togiya S."/>
            <person name="Komai F."/>
            <person name="Hara R."/>
            <person name="Takeuchi K."/>
            <person name="Arita M."/>
            <person name="Imose N."/>
            <person name="Musashino K."/>
            <person name="Yuuki H."/>
            <person name="Oshima A."/>
            <person name="Sasaki N."/>
            <person name="Aotsuka S."/>
            <person name="Yoshikawa Y."/>
            <person name="Matsunawa H."/>
            <person name="Ichihara T."/>
            <person name="Shiohata N."/>
            <person name="Sano S."/>
            <person name="Moriya S."/>
            <person name="Momiyama H."/>
            <person name="Satoh N."/>
            <person name="Takami S."/>
            <person name="Terashima Y."/>
            <person name="Suzuki O."/>
            <person name="Nakagawa S."/>
            <person name="Senoh A."/>
            <person name="Mizoguchi H."/>
            <person name="Goto Y."/>
            <person name="Shimizu F."/>
            <person name="Wakebe H."/>
            <person name="Hishigaki H."/>
            <person name="Watanabe T."/>
            <person name="Sugiyama A."/>
            <person name="Takemoto M."/>
            <person name="Kawakami B."/>
            <person name="Yamazaki M."/>
            <person name="Watanabe K."/>
            <person name="Kumagai A."/>
            <person name="Itakura S."/>
            <person name="Fukuzumi Y."/>
            <person name="Fujimori Y."/>
            <person name="Komiyama M."/>
            <person name="Tashiro H."/>
            <person name="Tanigami A."/>
            <person name="Fujiwara T."/>
            <person name="Ono T."/>
            <person name="Yamada K."/>
            <person name="Fujii Y."/>
            <person name="Ozaki K."/>
            <person name="Hirao M."/>
            <person name="Ohmori Y."/>
            <person name="Kawabata A."/>
            <person name="Hikiji T."/>
            <person name="Kobatake N."/>
            <person name="Inagaki H."/>
            <person name="Ikema Y."/>
            <person name="Okamoto S."/>
            <person name="Okitani R."/>
            <person name="Kawakami T."/>
            <person name="Noguchi S."/>
            <person name="Itoh T."/>
            <person name="Shigeta K."/>
            <person name="Senba T."/>
            <person name="Matsumura K."/>
            <person name="Nakajima Y."/>
            <person name="Mizuno T."/>
            <person name="Morinaga M."/>
            <person name="Sasaki M."/>
            <person name="Togashi T."/>
            <person name="Oyama M."/>
            <person name="Hata H."/>
            <person name="Watanabe M."/>
            <person name="Komatsu T."/>
            <person name="Mizushima-Sugano J."/>
            <person name="Satoh T."/>
            <person name="Shirai Y."/>
            <person name="Takahashi Y."/>
            <person name="Nakagawa K."/>
            <person name="Okumura K."/>
            <person name="Nagase T."/>
            <person name="Nomura N."/>
            <person name="Kikuchi H."/>
            <person name="Masuho Y."/>
            <person name="Yamashita R."/>
            <person name="Nakai K."/>
            <person name="Yada T."/>
            <person name="Nakamura Y."/>
            <person name="Ohara O."/>
            <person name="Isogai T."/>
            <person name="Sugano S."/>
        </authorList>
    </citation>
    <scope>NUCLEOTIDE SEQUENCE [LARGE SCALE MRNA] (ISOFORM 2)</scope>
    <source>
        <tissue>Caudate nucleus</tissue>
    </source>
</reference>
<reference key="3">
    <citation type="submission" date="2003-07" db="EMBL/GenBank/DDBJ databases">
        <authorList>
            <person name="Zhou G."/>
            <person name="Yu R."/>
            <person name="Zheng G."/>
            <person name="Li H."/>
            <person name="Shen C."/>
            <person name="Xiao W."/>
            <person name="Li M."/>
            <person name="Zhong G."/>
            <person name="Lin L."/>
            <person name="Yang S."/>
        </authorList>
    </citation>
    <scope>NUCLEOTIDE SEQUENCE [LARGE SCALE MRNA] OF 23-330 (ISOFORM 3)</scope>
</reference>